<accession>Q9TT34</accession>
<dbReference type="EMBL" id="AF205408">
    <property type="protein sequence ID" value="AAF23759.1"/>
    <property type="molecule type" value="Genomic_DNA"/>
</dbReference>
<dbReference type="SMR" id="Q9TT34"/>
<dbReference type="GO" id="GO:0020037">
    <property type="term" value="F:heme binding"/>
    <property type="evidence" value="ECO:0007669"/>
    <property type="project" value="InterPro"/>
</dbReference>
<dbReference type="GO" id="GO:0046872">
    <property type="term" value="F:metal ion binding"/>
    <property type="evidence" value="ECO:0007669"/>
    <property type="project" value="UniProtKB-KW"/>
</dbReference>
<dbReference type="GO" id="GO:0019825">
    <property type="term" value="F:oxygen binding"/>
    <property type="evidence" value="ECO:0007669"/>
    <property type="project" value="InterPro"/>
</dbReference>
<dbReference type="GO" id="GO:0005344">
    <property type="term" value="F:oxygen carrier activity"/>
    <property type="evidence" value="ECO:0007669"/>
    <property type="project" value="UniProtKB-KW"/>
</dbReference>
<dbReference type="Gene3D" id="1.10.490.10">
    <property type="entry name" value="Globins"/>
    <property type="match status" value="1"/>
</dbReference>
<dbReference type="InterPro" id="IPR000971">
    <property type="entry name" value="Globin"/>
</dbReference>
<dbReference type="InterPro" id="IPR009050">
    <property type="entry name" value="Globin-like_sf"/>
</dbReference>
<dbReference type="InterPro" id="IPR012292">
    <property type="entry name" value="Globin/Proto"/>
</dbReference>
<dbReference type="SUPFAM" id="SSF46458">
    <property type="entry name" value="Globin-like"/>
    <property type="match status" value="1"/>
</dbReference>
<dbReference type="PROSITE" id="PS01033">
    <property type="entry name" value="GLOBIN"/>
    <property type="match status" value="1"/>
</dbReference>
<reference key="1">
    <citation type="journal article" date="2000" name="Mol. Biol. Evol.">
        <title>Strand symmetry around the beta-globin origin of replication in primates.</title>
        <authorList>
            <person name="Francino M.P."/>
            <person name="Ochman H."/>
        </authorList>
    </citation>
    <scope>NUCLEOTIDE SEQUENCE [GENOMIC DNA]</scope>
    <source>
        <tissue>Blood</tissue>
    </source>
</reference>
<sequence length="36" mass="3934">VCVLAHHFGKEFTPQVQAAYQKVVAGVANALAHKYH</sequence>
<evidence type="ECO:0000250" key="1">
    <source>
        <dbReference type="UniProtKB" id="P68871"/>
    </source>
</evidence>
<evidence type="ECO:0000255" key="2">
    <source>
        <dbReference type="PROSITE-ProRule" id="PRU00238"/>
    </source>
</evidence>
<proteinExistence type="evidence at transcript level"/>
<name>HBB_PONPY</name>
<keyword id="KW-0007">Acetylation</keyword>
<keyword id="KW-0349">Heme</keyword>
<keyword id="KW-0408">Iron</keyword>
<keyword id="KW-0479">Metal-binding</keyword>
<keyword id="KW-0561">Oxygen transport</keyword>
<keyword id="KW-0813">Transport</keyword>
<protein>
    <recommendedName>
        <fullName>Hemoglobin subunit beta</fullName>
    </recommendedName>
    <alternativeName>
        <fullName>Beta-globin</fullName>
    </alternativeName>
    <alternativeName>
        <fullName>Hemoglobin beta chain</fullName>
    </alternativeName>
</protein>
<organism>
    <name type="scientific">Pongo pygmaeus</name>
    <name type="common">Bornean orangutan</name>
    <dbReference type="NCBI Taxonomy" id="9600"/>
    <lineage>
        <taxon>Eukaryota</taxon>
        <taxon>Metazoa</taxon>
        <taxon>Chordata</taxon>
        <taxon>Craniata</taxon>
        <taxon>Vertebrata</taxon>
        <taxon>Euteleostomi</taxon>
        <taxon>Mammalia</taxon>
        <taxon>Eutheria</taxon>
        <taxon>Euarchontoglires</taxon>
        <taxon>Primates</taxon>
        <taxon>Haplorrhini</taxon>
        <taxon>Catarrhini</taxon>
        <taxon>Hominidae</taxon>
        <taxon>Pongo</taxon>
    </lineage>
</organism>
<gene>
    <name type="primary">HBB</name>
</gene>
<feature type="chain" id="PRO_0000053073" description="Hemoglobin subunit beta">
    <location>
        <begin position="1" status="less than"/>
        <end position="36"/>
    </location>
</feature>
<feature type="domain" description="Globin" evidence="2">
    <location>
        <begin position="1"/>
        <end position="36"/>
    </location>
</feature>
<feature type="modified residue" description="N6-acetyllysine" evidence="1">
    <location>
        <position position="34"/>
    </location>
</feature>
<feature type="non-terminal residue">
    <location>
        <position position="1"/>
    </location>
</feature>
<comment type="function">
    <text>Involved in oxygen transport from the lung to the various peripheral tissues.</text>
</comment>
<comment type="subunit">
    <text>Heterotetramer of two alpha chains and two beta chains.</text>
</comment>
<comment type="tissue specificity">
    <text>Red blood cells.</text>
</comment>
<comment type="similarity">
    <text evidence="2">Belongs to the globin family.</text>
</comment>